<feature type="chain" id="PRO_0000142749" description="Matrix protein">
    <location>
        <begin position="1"/>
        <end position="369"/>
    </location>
</feature>
<sequence>MAMHAKIPLNQPQNQDTAQLQPFPLVMSEPENGKRRLLKQLRIKRIPPLSIGDQQITFINTYGFIRANRTFTEFISELHRPGLQPIVTACMLPFGAGPLLDSPEKILEGLDLCEIKVRKSAAVKEEILFEVTALPKIFQGFQISAQPLIKVSSEKYVKAPGKINAGVEYKFYPTFVSLTYCPTTLKIQGRQTLATVRAKFMRSIHLEILLIFECKDDAPMAKALIKRDERDGYQASVWVHMCNITKSTQKFKTYDDSYFGQKVLAMKPVIGLVDMWGPTITVHISGKMPKTAAPYFNSRGRSCHPLSEVAPSIAKMAWSNGCRIHQVNAILQESDLSLIPGSDDILFRKVPVDPENINFKSTYWNPFRK</sequence>
<reference key="1">
    <citation type="journal article" date="1991" name="J. Gen. Virol.">
        <title>Identification of the porcine paramyxovirus LPMV matrix protein gene: comparative sequence analysis with other paramyxoviruses.</title>
        <authorList>
            <person name="Berg M."/>
            <person name="Sundqvist A."/>
            <person name="Moreno-Lopez J."/>
            <person name="Linne T."/>
        </authorList>
    </citation>
    <scope>NUCLEOTIDE SEQUENCE</scope>
</reference>
<comment type="function">
    <text>The M protein has a crucial role in virus assembly and interacts with the RNP complex as well as with the viral membrane.</text>
</comment>
<comment type="subcellular location">
    <subcellularLocation>
        <location evidence="1">Virion</location>
    </subcellularLocation>
</comment>
<comment type="similarity">
    <text evidence="1">Belongs to the morbillivirus/respirovirus/rubulavirus M protein family.</text>
</comment>
<organism>
    <name type="scientific">La Piedad-Michoacan-Mexico virus</name>
    <name type="common">LPMV</name>
    <dbReference type="NCBI Taxonomy" id="3052562"/>
    <lineage>
        <taxon>Viruses</taxon>
        <taxon>Riboviria</taxon>
        <taxon>Orthornavirae</taxon>
        <taxon>Negarnaviricota</taxon>
        <taxon>Haploviricotina</taxon>
        <taxon>Monjiviricetes</taxon>
        <taxon>Mononegavirales</taxon>
        <taxon>Paramyxoviridae</taxon>
        <taxon>Rubulavirinae</taxon>
        <taxon>Orthorubulavirus</taxon>
    </lineage>
</organism>
<name>MATRX_LPMV</name>
<proteinExistence type="inferred from homology"/>
<keyword id="KW-0261">Viral envelope protein</keyword>
<keyword id="KW-0468">Viral matrix protein</keyword>
<keyword id="KW-0946">Virion</keyword>
<accession>P27287</accession>
<evidence type="ECO:0000305" key="1"/>
<protein>
    <recommendedName>
        <fullName>Matrix protein</fullName>
    </recommendedName>
</protein>
<organismHost>
    <name type="scientific">Sus scrofa</name>
    <name type="common">Pig</name>
    <dbReference type="NCBI Taxonomy" id="9823"/>
</organismHost>
<dbReference type="PIR" id="A38707">
    <property type="entry name" value="MFNZLA"/>
</dbReference>
<dbReference type="RefSeq" id="YP_001331032.1">
    <property type="nucleotide sequence ID" value="NC_009640.1"/>
</dbReference>
<dbReference type="SMR" id="P27287"/>
<dbReference type="GeneID" id="5329869"/>
<dbReference type="OrthoDB" id="3682at10239"/>
<dbReference type="GO" id="GO:0019031">
    <property type="term" value="C:viral envelope"/>
    <property type="evidence" value="ECO:0007669"/>
    <property type="project" value="UniProtKB-KW"/>
</dbReference>
<dbReference type="GO" id="GO:0039660">
    <property type="term" value="F:structural constituent of virion"/>
    <property type="evidence" value="ECO:0007669"/>
    <property type="project" value="UniProtKB-KW"/>
</dbReference>
<dbReference type="GO" id="GO:0019068">
    <property type="term" value="P:virion assembly"/>
    <property type="evidence" value="ECO:0007669"/>
    <property type="project" value="InterPro"/>
</dbReference>
<dbReference type="Gene3D" id="2.70.20.60">
    <property type="entry name" value="Viral matrix protein, C-terminal domain"/>
    <property type="match status" value="1"/>
</dbReference>
<dbReference type="Gene3D" id="2.70.20.50">
    <property type="entry name" value="Viral matrix protein, N-terminal domain"/>
    <property type="match status" value="1"/>
</dbReference>
<dbReference type="InterPro" id="IPR042539">
    <property type="entry name" value="Matrix_C"/>
</dbReference>
<dbReference type="InterPro" id="IPR042540">
    <property type="entry name" value="Matrix_N"/>
</dbReference>
<dbReference type="InterPro" id="IPR055413">
    <property type="entry name" value="Matrix_Paramyxo_C"/>
</dbReference>
<dbReference type="InterPro" id="IPR000982">
    <property type="entry name" value="Matrix_Paramyxo_N"/>
</dbReference>
<dbReference type="Pfam" id="PF23765">
    <property type="entry name" value="Matrix_Paramyxo_C"/>
    <property type="match status" value="1"/>
</dbReference>
<dbReference type="Pfam" id="PF00661">
    <property type="entry name" value="Matrix_Paramyxo_N"/>
    <property type="match status" value="1"/>
</dbReference>
<gene>
    <name type="primary">M</name>
</gene>